<keyword id="KW-0004">4Fe-4S</keyword>
<keyword id="KW-0408">Iron</keyword>
<keyword id="KW-0411">Iron-sulfur</keyword>
<keyword id="KW-0472">Membrane</keyword>
<keyword id="KW-0479">Metal-binding</keyword>
<keyword id="KW-0520">NAD</keyword>
<keyword id="KW-0521">NADP</keyword>
<keyword id="KW-0618">Plastoquinone</keyword>
<keyword id="KW-0874">Quinone</keyword>
<keyword id="KW-0677">Repeat</keyword>
<keyword id="KW-0793">Thylakoid</keyword>
<keyword id="KW-1278">Translocase</keyword>
<organism>
    <name type="scientific">Prochlorococcus marinus (strain MIT 9515)</name>
    <dbReference type="NCBI Taxonomy" id="167542"/>
    <lineage>
        <taxon>Bacteria</taxon>
        <taxon>Bacillati</taxon>
        <taxon>Cyanobacteriota</taxon>
        <taxon>Cyanophyceae</taxon>
        <taxon>Synechococcales</taxon>
        <taxon>Prochlorococcaceae</taxon>
        <taxon>Prochlorococcus</taxon>
    </lineage>
</organism>
<gene>
    <name evidence="1" type="primary">ndhI</name>
    <name type="ordered locus">P9515_01881</name>
</gene>
<sequence length="208" mass="24053">MKDFLQKVNSYIKEAFGAGKYLYDGLSVTFDHLRRRPVTVQYPYEKLIPSERYRGRIHYEFDKCIACEVCVRVCPINLPVVDWVMNKETKKKELRNYSIDFGVCIFCGNCVEYCPTNCLSMTEEYELATFDRHNLNFDNVALGRLPTNVTTDPSVKPLRELAYLPKGVMDPHEVSSSDARVGKLPEEVYDWMKPKTNEMSDPAVKLNK</sequence>
<protein>
    <recommendedName>
        <fullName evidence="1">NAD(P)H-quinone oxidoreductase subunit I</fullName>
        <ecNumber evidence="1">7.1.1.-</ecNumber>
    </recommendedName>
    <alternativeName>
        <fullName evidence="1">NAD(P)H dehydrogenase I subunit I</fullName>
    </alternativeName>
    <alternativeName>
        <fullName evidence="1">NDH-1 subunit I</fullName>
        <shortName evidence="1">NDH-I</shortName>
    </alternativeName>
</protein>
<dbReference type="EC" id="7.1.1.-" evidence="1"/>
<dbReference type="EMBL" id="CP000552">
    <property type="protein sequence ID" value="ABM71397.1"/>
    <property type="molecule type" value="Genomic_DNA"/>
</dbReference>
<dbReference type="RefSeq" id="WP_011819511.1">
    <property type="nucleotide sequence ID" value="NC_008817.1"/>
</dbReference>
<dbReference type="SMR" id="A2BUD6"/>
<dbReference type="STRING" id="167542.P9515_01881"/>
<dbReference type="GeneID" id="60201202"/>
<dbReference type="KEGG" id="pmc:P9515_01881"/>
<dbReference type="eggNOG" id="COG1143">
    <property type="taxonomic scope" value="Bacteria"/>
</dbReference>
<dbReference type="HOGENOM" id="CLU_122804_0_0_3"/>
<dbReference type="OrthoDB" id="9798098at2"/>
<dbReference type="Proteomes" id="UP000001589">
    <property type="component" value="Chromosome"/>
</dbReference>
<dbReference type="GO" id="GO:0031676">
    <property type="term" value="C:plasma membrane-derived thylakoid membrane"/>
    <property type="evidence" value="ECO:0007669"/>
    <property type="project" value="UniProtKB-SubCell"/>
</dbReference>
<dbReference type="GO" id="GO:0051539">
    <property type="term" value="F:4 iron, 4 sulfur cluster binding"/>
    <property type="evidence" value="ECO:0007669"/>
    <property type="project" value="UniProtKB-KW"/>
</dbReference>
<dbReference type="GO" id="GO:0005506">
    <property type="term" value="F:iron ion binding"/>
    <property type="evidence" value="ECO:0007669"/>
    <property type="project" value="UniProtKB-UniRule"/>
</dbReference>
<dbReference type="GO" id="GO:0008137">
    <property type="term" value="F:NADH dehydrogenase (ubiquinone) activity"/>
    <property type="evidence" value="ECO:0007669"/>
    <property type="project" value="InterPro"/>
</dbReference>
<dbReference type="GO" id="GO:0048038">
    <property type="term" value="F:quinone binding"/>
    <property type="evidence" value="ECO:0007669"/>
    <property type="project" value="UniProtKB-KW"/>
</dbReference>
<dbReference type="GO" id="GO:0019684">
    <property type="term" value="P:photosynthesis, light reaction"/>
    <property type="evidence" value="ECO:0007669"/>
    <property type="project" value="UniProtKB-UniRule"/>
</dbReference>
<dbReference type="Gene3D" id="3.30.70.3270">
    <property type="match status" value="1"/>
</dbReference>
<dbReference type="HAMAP" id="MF_01351">
    <property type="entry name" value="NDH1_NuoI"/>
    <property type="match status" value="1"/>
</dbReference>
<dbReference type="InterPro" id="IPR017896">
    <property type="entry name" value="4Fe4S_Fe-S-bd"/>
</dbReference>
<dbReference type="InterPro" id="IPR017900">
    <property type="entry name" value="4Fe4S_Fe_S_CS"/>
</dbReference>
<dbReference type="InterPro" id="IPR010226">
    <property type="entry name" value="NADH_quinone_OxRdtase_chainI"/>
</dbReference>
<dbReference type="InterPro" id="IPR004497">
    <property type="entry name" value="NDHI"/>
</dbReference>
<dbReference type="NCBIfam" id="TIGR00403">
    <property type="entry name" value="ndhI"/>
    <property type="match status" value="1"/>
</dbReference>
<dbReference type="NCBIfam" id="TIGR01971">
    <property type="entry name" value="NuoI"/>
    <property type="match status" value="1"/>
</dbReference>
<dbReference type="NCBIfam" id="NF004537">
    <property type="entry name" value="PRK05888.1-3"/>
    <property type="match status" value="1"/>
</dbReference>
<dbReference type="PANTHER" id="PTHR47275">
    <property type="entry name" value="NAD(P)H-QUINONE OXIDOREDUCTASE SUBUNIT I, CHLOROPLASTIC"/>
    <property type="match status" value="1"/>
</dbReference>
<dbReference type="PANTHER" id="PTHR47275:SF1">
    <property type="entry name" value="NAD(P)H-QUINONE OXIDOREDUCTASE SUBUNIT I, CHLOROPLASTIC"/>
    <property type="match status" value="1"/>
</dbReference>
<dbReference type="Pfam" id="PF12838">
    <property type="entry name" value="Fer4_7"/>
    <property type="match status" value="1"/>
</dbReference>
<dbReference type="SUPFAM" id="SSF54862">
    <property type="entry name" value="4Fe-4S ferredoxins"/>
    <property type="match status" value="1"/>
</dbReference>
<dbReference type="PROSITE" id="PS00198">
    <property type="entry name" value="4FE4S_FER_1"/>
    <property type="match status" value="2"/>
</dbReference>
<dbReference type="PROSITE" id="PS51379">
    <property type="entry name" value="4FE4S_FER_2"/>
    <property type="match status" value="2"/>
</dbReference>
<feature type="chain" id="PRO_0000298534" description="NAD(P)H-quinone oxidoreductase subunit I">
    <location>
        <begin position="1"/>
        <end position="208"/>
    </location>
</feature>
<feature type="domain" description="4Fe-4S ferredoxin-type 1" evidence="1">
    <location>
        <begin position="55"/>
        <end position="84"/>
    </location>
</feature>
<feature type="domain" description="4Fe-4S ferredoxin-type 2" evidence="1">
    <location>
        <begin position="95"/>
        <end position="124"/>
    </location>
</feature>
<feature type="binding site" evidence="1">
    <location>
        <position position="64"/>
    </location>
    <ligand>
        <name>[4Fe-4S] cluster</name>
        <dbReference type="ChEBI" id="CHEBI:49883"/>
        <label>1</label>
    </ligand>
</feature>
<feature type="binding site" evidence="1">
    <location>
        <position position="67"/>
    </location>
    <ligand>
        <name>[4Fe-4S] cluster</name>
        <dbReference type="ChEBI" id="CHEBI:49883"/>
        <label>1</label>
    </ligand>
</feature>
<feature type="binding site" evidence="1">
    <location>
        <position position="70"/>
    </location>
    <ligand>
        <name>[4Fe-4S] cluster</name>
        <dbReference type="ChEBI" id="CHEBI:49883"/>
        <label>1</label>
    </ligand>
</feature>
<feature type="binding site" evidence="1">
    <location>
        <position position="74"/>
    </location>
    <ligand>
        <name>[4Fe-4S] cluster</name>
        <dbReference type="ChEBI" id="CHEBI:49883"/>
        <label>2</label>
    </ligand>
</feature>
<feature type="binding site" evidence="1">
    <location>
        <position position="104"/>
    </location>
    <ligand>
        <name>[4Fe-4S] cluster</name>
        <dbReference type="ChEBI" id="CHEBI:49883"/>
        <label>2</label>
    </ligand>
</feature>
<feature type="binding site" evidence="1">
    <location>
        <position position="107"/>
    </location>
    <ligand>
        <name>[4Fe-4S] cluster</name>
        <dbReference type="ChEBI" id="CHEBI:49883"/>
        <label>2</label>
    </ligand>
</feature>
<feature type="binding site" evidence="1">
    <location>
        <position position="110"/>
    </location>
    <ligand>
        <name>[4Fe-4S] cluster</name>
        <dbReference type="ChEBI" id="CHEBI:49883"/>
        <label>2</label>
    </ligand>
</feature>
<feature type="binding site" evidence="1">
    <location>
        <position position="114"/>
    </location>
    <ligand>
        <name>[4Fe-4S] cluster</name>
        <dbReference type="ChEBI" id="CHEBI:49883"/>
        <label>1</label>
    </ligand>
</feature>
<accession>A2BUD6</accession>
<evidence type="ECO:0000255" key="1">
    <source>
        <dbReference type="HAMAP-Rule" id="MF_01351"/>
    </source>
</evidence>
<comment type="function">
    <text evidence="1">NDH-1 shuttles electrons from an unknown electron donor, via FMN and iron-sulfur (Fe-S) centers, to quinones in the respiratory and/or the photosynthetic chain. The immediate electron acceptor for the enzyme in this species is believed to be plastoquinone. Couples the redox reaction to proton translocation, and thus conserves the redox energy in a proton gradient.</text>
</comment>
<comment type="catalytic activity">
    <reaction evidence="1">
        <text>a plastoquinone + NADH + (n+1) H(+)(in) = a plastoquinol + NAD(+) + n H(+)(out)</text>
        <dbReference type="Rhea" id="RHEA:42608"/>
        <dbReference type="Rhea" id="RHEA-COMP:9561"/>
        <dbReference type="Rhea" id="RHEA-COMP:9562"/>
        <dbReference type="ChEBI" id="CHEBI:15378"/>
        <dbReference type="ChEBI" id="CHEBI:17757"/>
        <dbReference type="ChEBI" id="CHEBI:57540"/>
        <dbReference type="ChEBI" id="CHEBI:57945"/>
        <dbReference type="ChEBI" id="CHEBI:62192"/>
    </reaction>
</comment>
<comment type="catalytic activity">
    <reaction evidence="1">
        <text>a plastoquinone + NADPH + (n+1) H(+)(in) = a plastoquinol + NADP(+) + n H(+)(out)</text>
        <dbReference type="Rhea" id="RHEA:42612"/>
        <dbReference type="Rhea" id="RHEA-COMP:9561"/>
        <dbReference type="Rhea" id="RHEA-COMP:9562"/>
        <dbReference type="ChEBI" id="CHEBI:15378"/>
        <dbReference type="ChEBI" id="CHEBI:17757"/>
        <dbReference type="ChEBI" id="CHEBI:57783"/>
        <dbReference type="ChEBI" id="CHEBI:58349"/>
        <dbReference type="ChEBI" id="CHEBI:62192"/>
    </reaction>
</comment>
<comment type="cofactor">
    <cofactor evidence="1">
        <name>[4Fe-4S] cluster</name>
        <dbReference type="ChEBI" id="CHEBI:49883"/>
    </cofactor>
    <text evidence="1">Binds 2 [4Fe-4S] clusters per subunit.</text>
</comment>
<comment type="subunit">
    <text evidence="1">NDH-1 is composed of at least 11 different subunits.</text>
</comment>
<comment type="subcellular location">
    <subcellularLocation>
        <location evidence="1">Cellular thylakoid membrane</location>
        <topology evidence="1">Peripheral membrane protein</topology>
    </subcellularLocation>
</comment>
<comment type="similarity">
    <text evidence="1">Belongs to the complex I 23 kDa subunit family.</text>
</comment>
<proteinExistence type="inferred from homology"/>
<reference key="1">
    <citation type="journal article" date="2007" name="PLoS Genet.">
        <title>Patterns and implications of gene gain and loss in the evolution of Prochlorococcus.</title>
        <authorList>
            <person name="Kettler G.C."/>
            <person name="Martiny A.C."/>
            <person name="Huang K."/>
            <person name="Zucker J."/>
            <person name="Coleman M.L."/>
            <person name="Rodrigue S."/>
            <person name="Chen F."/>
            <person name="Lapidus A."/>
            <person name="Ferriera S."/>
            <person name="Johnson J."/>
            <person name="Steglich C."/>
            <person name="Church G.M."/>
            <person name="Richardson P."/>
            <person name="Chisholm S.W."/>
        </authorList>
    </citation>
    <scope>NUCLEOTIDE SEQUENCE [LARGE SCALE GENOMIC DNA]</scope>
    <source>
        <strain>MIT 9515</strain>
    </source>
</reference>
<name>NDHI_PROM5</name>